<evidence type="ECO:0000255" key="1">
    <source>
        <dbReference type="HAMAP-Rule" id="MF_00382"/>
    </source>
</evidence>
<evidence type="ECO:0000305" key="2"/>
<keyword id="KW-0687">Ribonucleoprotein</keyword>
<keyword id="KW-0689">Ribosomal protein</keyword>
<keyword id="KW-0694">RNA-binding</keyword>
<keyword id="KW-0699">rRNA-binding</keyword>
<sequence length="119" mass="13651">MARVKGGVVSRKRRKRVLKLAKGYYGAKHILFRTAKEQVMNSYYYAYRDRRQKKRDFRKLWITRINAAARMNGLSYSQLMHGLKLAEIEVNRKMLADLAVNDAAAFTALADAAKAKLGK</sequence>
<organism>
    <name type="scientific">Streptococcus agalactiae serotype III (strain NEM316)</name>
    <dbReference type="NCBI Taxonomy" id="211110"/>
    <lineage>
        <taxon>Bacteria</taxon>
        <taxon>Bacillati</taxon>
        <taxon>Bacillota</taxon>
        <taxon>Bacilli</taxon>
        <taxon>Lactobacillales</taxon>
        <taxon>Streptococcaceae</taxon>
        <taxon>Streptococcus</taxon>
    </lineage>
</organism>
<dbReference type="EMBL" id="AL766850">
    <property type="protein sequence ID" value="CAD47111.1"/>
    <property type="molecule type" value="Genomic_DNA"/>
</dbReference>
<dbReference type="RefSeq" id="WP_000124839.1">
    <property type="nucleotide sequence ID" value="NC_004368.1"/>
</dbReference>
<dbReference type="SMR" id="P66110"/>
<dbReference type="GeneID" id="98392912"/>
<dbReference type="KEGG" id="san:rplT"/>
<dbReference type="eggNOG" id="COG0292">
    <property type="taxonomic scope" value="Bacteria"/>
</dbReference>
<dbReference type="HOGENOM" id="CLU_123265_0_1_9"/>
<dbReference type="Proteomes" id="UP000000823">
    <property type="component" value="Chromosome"/>
</dbReference>
<dbReference type="GO" id="GO:1990904">
    <property type="term" value="C:ribonucleoprotein complex"/>
    <property type="evidence" value="ECO:0007669"/>
    <property type="project" value="UniProtKB-KW"/>
</dbReference>
<dbReference type="GO" id="GO:0005840">
    <property type="term" value="C:ribosome"/>
    <property type="evidence" value="ECO:0007669"/>
    <property type="project" value="UniProtKB-KW"/>
</dbReference>
<dbReference type="GO" id="GO:0019843">
    <property type="term" value="F:rRNA binding"/>
    <property type="evidence" value="ECO:0007669"/>
    <property type="project" value="UniProtKB-UniRule"/>
</dbReference>
<dbReference type="GO" id="GO:0003735">
    <property type="term" value="F:structural constituent of ribosome"/>
    <property type="evidence" value="ECO:0007669"/>
    <property type="project" value="InterPro"/>
</dbReference>
<dbReference type="GO" id="GO:0000027">
    <property type="term" value="P:ribosomal large subunit assembly"/>
    <property type="evidence" value="ECO:0007669"/>
    <property type="project" value="UniProtKB-UniRule"/>
</dbReference>
<dbReference type="GO" id="GO:0006412">
    <property type="term" value="P:translation"/>
    <property type="evidence" value="ECO:0007669"/>
    <property type="project" value="InterPro"/>
</dbReference>
<dbReference type="CDD" id="cd07026">
    <property type="entry name" value="Ribosomal_L20"/>
    <property type="match status" value="1"/>
</dbReference>
<dbReference type="FunFam" id="1.10.1900.20:FF:000001">
    <property type="entry name" value="50S ribosomal protein L20"/>
    <property type="match status" value="1"/>
</dbReference>
<dbReference type="Gene3D" id="6.10.160.10">
    <property type="match status" value="1"/>
</dbReference>
<dbReference type="Gene3D" id="1.10.1900.20">
    <property type="entry name" value="Ribosomal protein L20"/>
    <property type="match status" value="1"/>
</dbReference>
<dbReference type="HAMAP" id="MF_00382">
    <property type="entry name" value="Ribosomal_bL20"/>
    <property type="match status" value="1"/>
</dbReference>
<dbReference type="InterPro" id="IPR005813">
    <property type="entry name" value="Ribosomal_bL20"/>
</dbReference>
<dbReference type="InterPro" id="IPR049946">
    <property type="entry name" value="RIBOSOMAL_L20_CS"/>
</dbReference>
<dbReference type="InterPro" id="IPR035566">
    <property type="entry name" value="Ribosomal_protein_bL20_C"/>
</dbReference>
<dbReference type="NCBIfam" id="TIGR01032">
    <property type="entry name" value="rplT_bact"/>
    <property type="match status" value="1"/>
</dbReference>
<dbReference type="PANTHER" id="PTHR10986">
    <property type="entry name" value="39S RIBOSOMAL PROTEIN L20"/>
    <property type="match status" value="1"/>
</dbReference>
<dbReference type="Pfam" id="PF00453">
    <property type="entry name" value="Ribosomal_L20"/>
    <property type="match status" value="1"/>
</dbReference>
<dbReference type="PRINTS" id="PR00062">
    <property type="entry name" value="RIBOSOMALL20"/>
</dbReference>
<dbReference type="SUPFAM" id="SSF74731">
    <property type="entry name" value="Ribosomal protein L20"/>
    <property type="match status" value="1"/>
</dbReference>
<dbReference type="PROSITE" id="PS00937">
    <property type="entry name" value="RIBOSOMAL_L20"/>
    <property type="match status" value="1"/>
</dbReference>
<proteinExistence type="inferred from homology"/>
<comment type="function">
    <text evidence="1">Binds directly to 23S ribosomal RNA and is necessary for the in vitro assembly process of the 50S ribosomal subunit. It is not involved in the protein synthesizing functions of that subunit.</text>
</comment>
<comment type="similarity">
    <text evidence="1">Belongs to the bacterial ribosomal protein bL20 family.</text>
</comment>
<gene>
    <name evidence="1" type="primary">rplT</name>
    <name type="ordered locus">gbs1452</name>
</gene>
<accession>P66110</accession>
<accession>Q8DYU1</accession>
<accession>Q8E4E9</accession>
<reference key="1">
    <citation type="journal article" date="2002" name="Mol. Microbiol.">
        <title>Genome sequence of Streptococcus agalactiae, a pathogen causing invasive neonatal disease.</title>
        <authorList>
            <person name="Glaser P."/>
            <person name="Rusniok C."/>
            <person name="Buchrieser C."/>
            <person name="Chevalier F."/>
            <person name="Frangeul L."/>
            <person name="Msadek T."/>
            <person name="Zouine M."/>
            <person name="Couve E."/>
            <person name="Lalioui L."/>
            <person name="Poyart C."/>
            <person name="Trieu-Cuot P."/>
            <person name="Kunst F."/>
        </authorList>
    </citation>
    <scope>NUCLEOTIDE SEQUENCE [LARGE SCALE GENOMIC DNA]</scope>
    <source>
        <strain>NEM316</strain>
    </source>
</reference>
<protein>
    <recommendedName>
        <fullName evidence="1">Large ribosomal subunit protein bL20</fullName>
    </recommendedName>
    <alternativeName>
        <fullName evidence="2">50S ribosomal protein L20</fullName>
    </alternativeName>
</protein>
<name>RL20_STRA3</name>
<feature type="chain" id="PRO_0000177233" description="Large ribosomal subunit protein bL20">
    <location>
        <begin position="1"/>
        <end position="119"/>
    </location>
</feature>